<dbReference type="EMBL" id="X62974">
    <property type="protein sequence ID" value="CAA44724.1"/>
    <property type="molecule type" value="mRNA"/>
</dbReference>
<dbReference type="PIR" id="S19005">
    <property type="entry name" value="S19005"/>
</dbReference>
<dbReference type="RefSeq" id="NP_001095261.1">
    <property type="nucleotide sequence ID" value="NM_001101791.1"/>
</dbReference>
<dbReference type="BMRB" id="P52730"/>
<dbReference type="SMR" id="P52730"/>
<dbReference type="GeneID" id="399321"/>
<dbReference type="KEGG" id="xla:399321"/>
<dbReference type="AGR" id="Xenbase:XB-GENE-6254047"/>
<dbReference type="CTD" id="399321"/>
<dbReference type="Xenbase" id="XB-GENE-6254047">
    <property type="gene designation" value="en2.S"/>
</dbReference>
<dbReference type="OMA" id="ERHEECE"/>
<dbReference type="OrthoDB" id="6159439at2759"/>
<dbReference type="Proteomes" id="UP000186698">
    <property type="component" value="Chromosome 6S"/>
</dbReference>
<dbReference type="Bgee" id="399321">
    <property type="expression patterns" value="Expressed in neurula embryo and 1 other cell type or tissue"/>
</dbReference>
<dbReference type="GO" id="GO:0005634">
    <property type="term" value="C:nucleus"/>
    <property type="evidence" value="ECO:0000318"/>
    <property type="project" value="GO_Central"/>
</dbReference>
<dbReference type="GO" id="GO:0000981">
    <property type="term" value="F:DNA-binding transcription factor activity, RNA polymerase II-specific"/>
    <property type="evidence" value="ECO:0000318"/>
    <property type="project" value="GO_Central"/>
</dbReference>
<dbReference type="GO" id="GO:0000978">
    <property type="term" value="F:RNA polymerase II cis-regulatory region sequence-specific DNA binding"/>
    <property type="evidence" value="ECO:0000318"/>
    <property type="project" value="GO_Central"/>
</dbReference>
<dbReference type="GO" id="GO:0030182">
    <property type="term" value="P:neuron differentiation"/>
    <property type="evidence" value="ECO:0007669"/>
    <property type="project" value="TreeGrafter"/>
</dbReference>
<dbReference type="GO" id="GO:0006357">
    <property type="term" value="P:regulation of transcription by RNA polymerase II"/>
    <property type="evidence" value="ECO:0000318"/>
    <property type="project" value="GO_Central"/>
</dbReference>
<dbReference type="CDD" id="cd00086">
    <property type="entry name" value="homeodomain"/>
    <property type="match status" value="1"/>
</dbReference>
<dbReference type="FunFam" id="1.10.10.60:FF:000167">
    <property type="entry name" value="Homeobox protein engrailed-like"/>
    <property type="match status" value="1"/>
</dbReference>
<dbReference type="Gene3D" id="1.10.10.60">
    <property type="entry name" value="Homeodomain-like"/>
    <property type="match status" value="1"/>
</dbReference>
<dbReference type="InterPro" id="IPR050720">
    <property type="entry name" value="Engrailed_Homeobox_TFs"/>
</dbReference>
<dbReference type="InterPro" id="IPR001356">
    <property type="entry name" value="HD"/>
</dbReference>
<dbReference type="InterPro" id="IPR000747">
    <property type="entry name" value="HD_engrailed"/>
</dbReference>
<dbReference type="InterPro" id="IPR020479">
    <property type="entry name" value="HD_metazoa"/>
</dbReference>
<dbReference type="InterPro" id="IPR019549">
    <property type="entry name" value="Homeobox-engrailed_C-terminal"/>
</dbReference>
<dbReference type="InterPro" id="IPR019737">
    <property type="entry name" value="Homeobox-engrailed_CS"/>
</dbReference>
<dbReference type="InterPro" id="IPR017970">
    <property type="entry name" value="Homeobox_CS"/>
</dbReference>
<dbReference type="InterPro" id="IPR009057">
    <property type="entry name" value="Homeodomain-like_sf"/>
</dbReference>
<dbReference type="InterPro" id="IPR000047">
    <property type="entry name" value="HTH_motif"/>
</dbReference>
<dbReference type="PANTHER" id="PTHR24341">
    <property type="entry name" value="HOMEOBOX PROTEIN ENGRAILED"/>
    <property type="match status" value="1"/>
</dbReference>
<dbReference type="PANTHER" id="PTHR24341:SF5">
    <property type="entry name" value="HOMEOBOX PROTEIN ENGRAILED-2"/>
    <property type="match status" value="1"/>
</dbReference>
<dbReference type="Pfam" id="PF10525">
    <property type="entry name" value="Engrail_1_C_sig"/>
    <property type="match status" value="1"/>
</dbReference>
<dbReference type="Pfam" id="PF00046">
    <property type="entry name" value="Homeodomain"/>
    <property type="match status" value="1"/>
</dbReference>
<dbReference type="PRINTS" id="PR00026">
    <property type="entry name" value="ENGRAILED"/>
</dbReference>
<dbReference type="PRINTS" id="PR00024">
    <property type="entry name" value="HOMEOBOX"/>
</dbReference>
<dbReference type="PRINTS" id="PR00031">
    <property type="entry name" value="HTHREPRESSR"/>
</dbReference>
<dbReference type="SMART" id="SM00389">
    <property type="entry name" value="HOX"/>
    <property type="match status" value="1"/>
</dbReference>
<dbReference type="SUPFAM" id="SSF46689">
    <property type="entry name" value="Homeodomain-like"/>
    <property type="match status" value="1"/>
</dbReference>
<dbReference type="PROSITE" id="PS00033">
    <property type="entry name" value="ENGRAILED"/>
    <property type="match status" value="1"/>
</dbReference>
<dbReference type="PROSITE" id="PS00027">
    <property type="entry name" value="HOMEOBOX_1"/>
    <property type="match status" value="1"/>
</dbReference>
<dbReference type="PROSITE" id="PS50071">
    <property type="entry name" value="HOMEOBOX_2"/>
    <property type="match status" value="1"/>
</dbReference>
<name>HME2B_XENLA</name>
<organism>
    <name type="scientific">Xenopus laevis</name>
    <name type="common">African clawed frog</name>
    <dbReference type="NCBI Taxonomy" id="8355"/>
    <lineage>
        <taxon>Eukaryota</taxon>
        <taxon>Metazoa</taxon>
        <taxon>Chordata</taxon>
        <taxon>Craniata</taxon>
        <taxon>Vertebrata</taxon>
        <taxon>Euteleostomi</taxon>
        <taxon>Amphibia</taxon>
        <taxon>Batrachia</taxon>
        <taxon>Anura</taxon>
        <taxon>Pipoidea</taxon>
        <taxon>Pipidae</taxon>
        <taxon>Xenopodinae</taxon>
        <taxon>Xenopus</taxon>
        <taxon>Xenopus</taxon>
    </lineage>
</organism>
<evidence type="ECO:0000255" key="1">
    <source>
        <dbReference type="PROSITE-ProRule" id="PRU00108"/>
    </source>
</evidence>
<evidence type="ECO:0000256" key="2">
    <source>
        <dbReference type="SAM" id="MobiDB-lite"/>
    </source>
</evidence>
<evidence type="ECO:0000305" key="3"/>
<proteinExistence type="evidence at transcript level"/>
<reference key="1">
    <citation type="journal article" date="1991" name="Development">
        <title>Cephalic expression and molecular characterization of Xenopus En-2.</title>
        <authorList>
            <person name="Hemmati-Brivanlou A."/>
            <person name="de la Torre J.R."/>
            <person name="Holt C."/>
            <person name="Harland R.M."/>
        </authorList>
    </citation>
    <scope>NUCLEOTIDE SEQUENCE [MRNA]</scope>
    <source>
        <tissue>Head</tissue>
    </source>
</reference>
<feature type="chain" id="PRO_0000196071" description="Homeobox protein engrailed-2-B">
    <location>
        <begin position="1"/>
        <end position="265"/>
    </location>
</feature>
<feature type="DNA-binding region" description="Homeobox" evidence="1">
    <location>
        <begin position="176"/>
        <end position="235"/>
    </location>
</feature>
<feature type="region of interest" description="Disordered" evidence="2">
    <location>
        <begin position="1"/>
        <end position="38"/>
    </location>
</feature>
<feature type="region of interest" description="Disordered" evidence="2">
    <location>
        <begin position="60"/>
        <end position="138"/>
    </location>
</feature>
<feature type="region of interest" description="Disordered" evidence="2">
    <location>
        <begin position="156"/>
        <end position="182"/>
    </location>
</feature>
<feature type="compositionally biased region" description="Basic and acidic residues" evidence="2">
    <location>
        <begin position="1"/>
        <end position="12"/>
    </location>
</feature>
<feature type="compositionally biased region" description="Basic and acidic residues" evidence="2">
    <location>
        <begin position="102"/>
        <end position="115"/>
    </location>
</feature>
<feature type="compositionally biased region" description="Low complexity" evidence="2">
    <location>
        <begin position="122"/>
        <end position="136"/>
    </location>
</feature>
<gene>
    <name type="primary">en2-b</name>
    <name type="synonym">en2b</name>
</gene>
<protein>
    <recommendedName>
        <fullName>Homeobox protein engrailed-2-B</fullName>
        <shortName>En-2B</shortName>
        <shortName>Homeobox protein en-2-B</shortName>
    </recommendedName>
    <alternativeName>
        <fullName>En2 MABEN</fullName>
    </alternativeName>
</protein>
<sequence>MEENEQNNREVEPQQESGEESNRGILHQAPPGNHQPHHRITNFFIDNILRPEFGRRKERINHQDELFTGRDTGALSGAESGHHRVNVPEGAGGSSKVITVTGEKKSDLAMEETLKSRGLNGDHSLSSDSDSSQASSKATQKPILWPAWVYCTRYSDRPSSGPRSRKPKKKSVSKEDKRPRTAFTAEQLQRLKAEFQTNRYLTEQRRQSLAQELGLNESQIKIWFQNKRAKIKKSTGNKNSLALHLMAQGLYNHATTSKDGKSDSE</sequence>
<accession>P52730</accession>
<keyword id="KW-0217">Developmental protein</keyword>
<keyword id="KW-0238">DNA-binding</keyword>
<keyword id="KW-0371">Homeobox</keyword>
<keyword id="KW-0539">Nucleus</keyword>
<keyword id="KW-1185">Reference proteome</keyword>
<comment type="subcellular location">
    <subcellularLocation>
        <location evidence="1">Nucleus</location>
    </subcellularLocation>
</comment>
<comment type="developmental stage">
    <text>In addition to the main band of expression at the midbrain-hindbrain boundary, the protein is expressed in the mandibular arch, the optic tectum and the region of anterior pituitary.</text>
</comment>
<comment type="similarity">
    <text evidence="3">Belongs to the engrailed homeobox family.</text>
</comment>